<comment type="function">
    <text evidence="4">Antimicrobial peptide with activities against E.coli (MIC=1.3 uM), S.aureus (MIC=3.1 uM), and S.cerevisiae (MIC=50 uM). Also shows histamine-releasing activity (32.9% at 10 uM). Does not show hemolytic activity, even at 50 uM. It is a short peptide for which no alpha-helical region has been predicted.</text>
</comment>
<comment type="subcellular location">
    <subcellularLocation>
        <location evidence="3">Secreted</location>
    </subcellularLocation>
</comment>
<comment type="tissue specificity">
    <text evidence="7">Expressed by the venom gland.</text>
</comment>
<comment type="PTM">
    <text evidence="7 8">Truncated sequences of this peptide have also been found in the venom. It is possible they have been cleaved in the venom.</text>
</comment>
<comment type="mass spectrometry"/>
<comment type="similarity">
    <text evidence="6">Belongs to the formicidae venom precursor-01 superfamily.</text>
</comment>
<keyword id="KW-0027">Amidation</keyword>
<keyword id="KW-0044">Antibiotic</keyword>
<keyword id="KW-0929">Antimicrobial</keyword>
<keyword id="KW-0903">Direct protein sequencing</keyword>
<keyword id="KW-0964">Secreted</keyword>
<keyword id="KW-0732">Signal</keyword>
<dbReference type="EMBL" id="LC316119">
    <property type="protein sequence ID" value="BBF98060.1"/>
    <property type="molecule type" value="mRNA"/>
</dbReference>
<dbReference type="SMR" id="A0A348G6I7"/>
<dbReference type="GO" id="GO:0005576">
    <property type="term" value="C:extracellular region"/>
    <property type="evidence" value="ECO:0007669"/>
    <property type="project" value="UniProtKB-SubCell"/>
</dbReference>
<dbReference type="GO" id="GO:0042742">
    <property type="term" value="P:defense response to bacterium"/>
    <property type="evidence" value="ECO:0007669"/>
    <property type="project" value="UniProtKB-KW"/>
</dbReference>
<feature type="signal peptide" evidence="2">
    <location>
        <begin position="1"/>
        <end position="27"/>
    </location>
</feature>
<feature type="propeptide" id="PRO_0000447066" evidence="7">
    <location>
        <begin position="28"/>
        <end position="45"/>
    </location>
</feature>
<feature type="peptide" id="PRO_5017013278" description="U-poneritoxin(01)-Om1a" evidence="3 4">
    <location>
        <begin position="46"/>
        <end position="62"/>
    </location>
</feature>
<feature type="modified residue" description="Methionine amide" evidence="3">
    <location>
        <position position="62"/>
    </location>
</feature>
<evidence type="ECO:0000250" key="1">
    <source>
        <dbReference type="UniProtKB" id="A0A348G5W2"/>
    </source>
</evidence>
<evidence type="ECO:0000255" key="2"/>
<evidence type="ECO:0000269" key="3">
    <source>
    </source>
</evidence>
<evidence type="ECO:0000269" key="4">
    <source>
    </source>
</evidence>
<evidence type="ECO:0000303" key="5">
    <source>
    </source>
</evidence>
<evidence type="ECO:0000305" key="6"/>
<evidence type="ECO:0000305" key="7">
    <source>
    </source>
</evidence>
<evidence type="ECO:0000305" key="8">
    <source>
    </source>
</evidence>
<evidence type="ECO:0000312" key="9">
    <source>
        <dbReference type="EMBL" id="BBF98060.1"/>
    </source>
</evidence>
<protein>
    <recommendedName>
        <fullName evidence="1">U-poneritoxin(01)-Om1a</fullName>
        <shortName evidence="1">U-PONTX(01)-Om1a</shortName>
    </recommendedName>
    <alternativeName>
        <fullName evidence="9">Pilosulin-like peptide 1</fullName>
        <shortName evidence="5">PLP1</shortName>
    </alternativeName>
    <alternativeName>
        <fullName evidence="6">Poneratoxin</fullName>
    </alternativeName>
</protein>
<organism>
    <name type="scientific">Odontomachus monticola</name>
    <name type="common">Trap-jaw ant</name>
    <dbReference type="NCBI Taxonomy" id="613454"/>
    <lineage>
        <taxon>Eukaryota</taxon>
        <taxon>Metazoa</taxon>
        <taxon>Ecdysozoa</taxon>
        <taxon>Arthropoda</taxon>
        <taxon>Hexapoda</taxon>
        <taxon>Insecta</taxon>
        <taxon>Pterygota</taxon>
        <taxon>Neoptera</taxon>
        <taxon>Endopterygota</taxon>
        <taxon>Hymenoptera</taxon>
        <taxon>Apocrita</taxon>
        <taxon>Aculeata</taxon>
        <taxon>Formicoidea</taxon>
        <taxon>Formicidae</taxon>
        <taxon>Ponerinae</taxon>
        <taxon>Ponerini</taxon>
        <taxon>Odontomachus</taxon>
    </lineage>
</organism>
<reference key="1">
    <citation type="journal article" date="2017" name="Toxins">
        <title>Combined venom gland transcriptomic and venom peptidomic analysis of the predatory ant Odontomachus monticola.</title>
        <authorList>
            <person name="Kazuma K."/>
            <person name="Masuko K."/>
            <person name="Konno K."/>
            <person name="Inagaki H."/>
        </authorList>
    </citation>
    <scope>NUCLEOTIDE SEQUENCE [MRNA]</scope>
    <scope>PROTEIN SEQUENCE OF 46-62</scope>
    <scope>MASS SPECTROMETRY</scope>
    <scope>AMIDATION AT MET-62</scope>
    <scope>SUBCELLULAR LOCATION</scope>
    <source>
        <tissue>Venom</tissue>
        <tissue>Venom gland</tissue>
    </source>
</reference>
<reference key="2">
    <citation type="journal article" date="2019" name="Toxins">
        <title>Mass spectrometry analysis and biological characterization of the predatory ant Odontomachus monticola venom and venom sac components.</title>
        <authorList>
            <person name="Tani N."/>
            <person name="Kazuma K."/>
            <person name="Ohtsuka Y."/>
            <person name="Shigeri Y."/>
            <person name="Masuko K."/>
            <person name="Konno K."/>
            <person name="Inagaki H."/>
        </authorList>
    </citation>
    <scope>FUNCTION</scope>
    <scope>IDENTIFICATION BY MASS SPECTROMETRY</scope>
    <scope>SYNTHESIS OF PEPTIDE WITH UNKNOWN TERMINAL RESIDUES</scope>
    <scope>SUBCELLULAR LOCATION</scope>
    <source>
        <tissue>Venom</tissue>
    </source>
</reference>
<name>TX11A_ODOMO</name>
<sequence>MKPSGLTFAFLVVFMMAIMYNSVQVTADADADAEAEALANALAEAGILDWGKKVMDWIKDKMGK</sequence>
<accession>A0A348G6I7</accession>
<proteinExistence type="evidence at protein level"/>